<feature type="chain" id="PRO_0000074513" description="Epsin-1">
    <location>
        <begin position="1"/>
        <end position="576"/>
    </location>
</feature>
<feature type="domain" description="ENTH" evidence="5">
    <location>
        <begin position="12"/>
        <end position="144"/>
    </location>
</feature>
<feature type="domain" description="UIM 1" evidence="4">
    <location>
        <begin position="183"/>
        <end position="202"/>
    </location>
</feature>
<feature type="domain" description="UIM 2" evidence="4">
    <location>
        <begin position="208"/>
        <end position="227"/>
    </location>
</feature>
<feature type="domain" description="UIM 3" evidence="4">
    <location>
        <begin position="233"/>
        <end position="252"/>
    </location>
</feature>
<feature type="repeat" description="1">
    <location>
        <begin position="274"/>
        <end position="276"/>
    </location>
</feature>
<feature type="repeat" description="2">
    <location>
        <begin position="294"/>
        <end position="296"/>
    </location>
</feature>
<feature type="repeat" description="3">
    <location>
        <begin position="306"/>
        <end position="308"/>
    </location>
</feature>
<feature type="repeat" description="4">
    <location>
        <begin position="319"/>
        <end position="321"/>
    </location>
</feature>
<feature type="repeat" description="5">
    <location>
        <begin position="332"/>
        <end position="334"/>
    </location>
</feature>
<feature type="repeat" description="6">
    <location>
        <begin position="349"/>
        <end position="351"/>
    </location>
</feature>
<feature type="repeat" description="7">
    <location>
        <begin position="367"/>
        <end position="369"/>
    </location>
</feature>
<feature type="repeat" description="8">
    <location>
        <begin position="377"/>
        <end position="379"/>
    </location>
</feature>
<feature type="repeat" description="1">
    <location>
        <begin position="502"/>
        <end position="504"/>
    </location>
</feature>
<feature type="repeat" description="2">
    <location>
        <begin position="518"/>
        <end position="520"/>
    </location>
</feature>
<feature type="repeat" description="3">
    <location>
        <begin position="572"/>
        <end position="574"/>
    </location>
</feature>
<feature type="region of interest" description="Disordered" evidence="6">
    <location>
        <begin position="149"/>
        <end position="185"/>
    </location>
</feature>
<feature type="region of interest" description="Disordered" evidence="6">
    <location>
        <begin position="265"/>
        <end position="404"/>
    </location>
</feature>
<feature type="region of interest" description="8 X 3 AA repeats of [ED]-P-W">
    <location>
        <begin position="274"/>
        <end position="379"/>
    </location>
</feature>
<feature type="region of interest" description="Disordered" evidence="6">
    <location>
        <begin position="448"/>
        <end position="576"/>
    </location>
</feature>
<feature type="region of interest" description="3 X 3 AA repeats of N-P-F">
    <location>
        <begin position="502"/>
        <end position="574"/>
    </location>
</feature>
<feature type="short sequence motif" description="[DE]-X(1,2)-F-X-X-[FL]-X-X-X-R motif">
    <location>
        <begin position="402"/>
        <end position="411"/>
    </location>
</feature>
<feature type="compositionally biased region" description="Low complexity" evidence="6">
    <location>
        <begin position="157"/>
        <end position="167"/>
    </location>
</feature>
<feature type="compositionally biased region" description="Low complexity" evidence="6">
    <location>
        <begin position="265"/>
        <end position="296"/>
    </location>
</feature>
<feature type="compositionally biased region" description="Pro residues" evidence="6">
    <location>
        <begin position="297"/>
        <end position="314"/>
    </location>
</feature>
<feature type="compositionally biased region" description="Low complexity" evidence="6">
    <location>
        <begin position="332"/>
        <end position="368"/>
    </location>
</feature>
<feature type="compositionally biased region" description="Pro residues" evidence="6">
    <location>
        <begin position="454"/>
        <end position="468"/>
    </location>
</feature>
<feature type="compositionally biased region" description="Pro residues" evidence="6">
    <location>
        <begin position="557"/>
        <end position="570"/>
    </location>
</feature>
<feature type="binding site" evidence="1">
    <location>
        <position position="8"/>
    </location>
    <ligand>
        <name>a 1,2-diacyl-sn-glycero-3-phospho-(1D-myo-inositol-4,5-bisphosphate)</name>
        <dbReference type="ChEBI" id="CHEBI:58456"/>
    </ligand>
</feature>
<feature type="binding site" evidence="1">
    <location>
        <position position="11"/>
    </location>
    <ligand>
        <name>a 1,2-diacyl-sn-glycero-3-phospho-(1D-myo-inositol-4,5-bisphosphate)</name>
        <dbReference type="ChEBI" id="CHEBI:58456"/>
    </ligand>
</feature>
<feature type="binding site" evidence="1">
    <location>
        <position position="25"/>
    </location>
    <ligand>
        <name>a 1,2-diacyl-sn-glycero-3-phospho-(1D-myo-inositol-4,5-bisphosphate)</name>
        <dbReference type="ChEBI" id="CHEBI:58456"/>
    </ligand>
</feature>
<feature type="binding site" evidence="1">
    <location>
        <position position="30"/>
    </location>
    <ligand>
        <name>a 1,2-diacyl-sn-glycero-3-phospho-(1D-myo-inositol-4,5-bisphosphate)</name>
        <dbReference type="ChEBI" id="CHEBI:58456"/>
    </ligand>
</feature>
<feature type="binding site" evidence="1">
    <location>
        <position position="63"/>
    </location>
    <ligand>
        <name>a 1,2-diacyl-sn-glycero-3-phospho-(1D-myo-inositol-4,5-bisphosphate)</name>
        <dbReference type="ChEBI" id="CHEBI:58456"/>
    </ligand>
</feature>
<feature type="binding site" evidence="1">
    <location>
        <position position="73"/>
    </location>
    <ligand>
        <name>a 1,2-diacyl-sn-glycero-3-phospho-(1D-myo-inositol-4,5-bisphosphate)</name>
        <dbReference type="ChEBI" id="CHEBI:58456"/>
    </ligand>
</feature>
<feature type="modified residue" description="Phosphoserine; by CDK1" evidence="9">
    <location>
        <position position="382"/>
    </location>
</feature>
<feature type="modified residue" description="Phosphoserine" evidence="20 23">
    <location>
        <position position="419"/>
    </location>
</feature>
<feature type="modified residue" description="Phosphoserine" evidence="20 23">
    <location>
        <position position="420"/>
    </location>
</feature>
<feature type="modified residue" description="Phosphoserine" evidence="19 20 21 22 23">
    <location>
        <position position="435"/>
    </location>
</feature>
<feature type="modified residue" description="Phosphoserine" evidence="22 23">
    <location>
        <position position="447"/>
    </location>
</feature>
<feature type="modified residue" description="Phosphoserine" evidence="17 19 20 21 22 23">
    <location>
        <position position="454"/>
    </location>
</feature>
<feature type="modified residue" description="Phosphothreonine" evidence="17 19 20 21">
    <location>
        <position position="460"/>
    </location>
</feature>
<feature type="modified residue" description="Phosphothreonine" evidence="23">
    <location>
        <position position="464"/>
    </location>
</feature>
<feature type="modified residue" description="Phosphothreonine" evidence="20">
    <location>
        <position position="470"/>
    </location>
</feature>
<feature type="modified residue" description="Phosphoserine" evidence="3">
    <location>
        <position position="473"/>
    </location>
</feature>
<feature type="modified residue" description="Phosphothreonine" evidence="18 19 21">
    <location>
        <position position="494"/>
    </location>
</feature>
<feature type="modified residue" description="Omega-N-methylarginine" evidence="3">
    <location>
        <position position="534"/>
    </location>
</feature>
<feature type="splice variant" id="VSP_041010" description="In isoform 2." evidence="14">
    <original>M</original>
    <variation>MGDQSWLWNQAAPGVRSPVFACSVEKGNVPLVLSEHLAHSRDPGSGAVRFLISPEPWASAILGTSGLLASPVLPAALDAVTCQHLPQPSSGSRPISPRIGALCPLLLQPGTM</variation>
    <location>
        <position position="1"/>
    </location>
</feature>
<feature type="splice variant" id="VSP_041011" description="In isoform 2 and isoform 3." evidence="14 15">
    <location>
        <begin position="202"/>
        <end position="226"/>
    </location>
</feature>
<feature type="splice variant" id="VSP_041012" description="In isoform 3." evidence="15">
    <location>
        <position position="393"/>
    </location>
</feature>
<feature type="mutagenesis site" description="Abolishes phosphorylation by CDK1." evidence="9">
    <original>S</original>
    <variation>A</variation>
    <location>
        <position position="382"/>
    </location>
</feature>
<feature type="mutagenesis site" description="Abolishes phosphorylation by CDK1 and reduces REPS2 binding." evidence="9">
    <original>S</original>
    <variation>D</variation>
    <location>
        <position position="382"/>
    </location>
</feature>
<feature type="mutagenesis site" description="Reduces interaction with AP2B1." evidence="11">
    <original>F</original>
    <variation>A</variation>
    <location>
        <position position="404"/>
    </location>
</feature>
<feature type="helix" evidence="24">
    <location>
        <begin position="20"/>
        <end position="27"/>
    </location>
</feature>
<feature type="helix" evidence="24">
    <location>
        <begin position="39"/>
        <end position="47"/>
    </location>
</feature>
<feature type="helix" evidence="24">
    <location>
        <begin position="51"/>
        <end position="62"/>
    </location>
</feature>
<feature type="helix" evidence="24">
    <location>
        <begin position="63"/>
        <end position="65"/>
    </location>
</feature>
<feature type="helix" evidence="24">
    <location>
        <begin position="72"/>
        <end position="86"/>
    </location>
</feature>
<feature type="helix" evidence="24">
    <location>
        <begin position="90"/>
        <end position="98"/>
    </location>
</feature>
<feature type="helix" evidence="24">
    <location>
        <begin position="100"/>
        <end position="108"/>
    </location>
</feature>
<feature type="helix" evidence="24">
    <location>
        <begin position="121"/>
        <end position="134"/>
    </location>
</feature>
<keyword id="KW-0002">3D-structure</keyword>
<keyword id="KW-0025">Alternative splicing</keyword>
<keyword id="KW-1003">Cell membrane</keyword>
<keyword id="KW-0168">Coated pit</keyword>
<keyword id="KW-0963">Cytoplasm</keyword>
<keyword id="KW-0254">Endocytosis</keyword>
<keyword id="KW-0446">Lipid-binding</keyword>
<keyword id="KW-0472">Membrane</keyword>
<keyword id="KW-0488">Methylation</keyword>
<keyword id="KW-0539">Nucleus</keyword>
<keyword id="KW-0597">Phosphoprotein</keyword>
<keyword id="KW-1267">Proteomics identification</keyword>
<keyword id="KW-1185">Reference proteome</keyword>
<keyword id="KW-0677">Repeat</keyword>
<keyword id="KW-0832">Ubl conjugation</keyword>
<reference key="1">
    <citation type="journal article" date="1999" name="Oncogene">
        <title>Epsin binds to the EH domain of POB1 and regulates receptor-mediated endocytosis.</title>
        <authorList>
            <person name="Morinaka K."/>
            <person name="Koyama S."/>
            <person name="Nakashima S."/>
            <person name="Hinoi T."/>
            <person name="Okawa K."/>
            <person name="Iwamatsu A."/>
            <person name="Kikuchi A."/>
        </authorList>
    </citation>
    <scope>NUCLEOTIDE SEQUENCE [MRNA] (ISOFORM 2)</scope>
    <scope>FUNCTION</scope>
    <scope>INTERACTION WITH REPS2</scope>
    <source>
        <tissue>Brain</tissue>
    </source>
</reference>
<reference key="2">
    <citation type="journal article" date="2004" name="Nat. Genet.">
        <title>Complete sequencing and characterization of 21,243 full-length human cDNAs.</title>
        <authorList>
            <person name="Ota T."/>
            <person name="Suzuki Y."/>
            <person name="Nishikawa T."/>
            <person name="Otsuki T."/>
            <person name="Sugiyama T."/>
            <person name="Irie R."/>
            <person name="Wakamatsu A."/>
            <person name="Hayashi K."/>
            <person name="Sato H."/>
            <person name="Nagai K."/>
            <person name="Kimura K."/>
            <person name="Makita H."/>
            <person name="Sekine M."/>
            <person name="Obayashi M."/>
            <person name="Nishi T."/>
            <person name="Shibahara T."/>
            <person name="Tanaka T."/>
            <person name="Ishii S."/>
            <person name="Yamamoto J."/>
            <person name="Saito K."/>
            <person name="Kawai Y."/>
            <person name="Isono Y."/>
            <person name="Nakamura Y."/>
            <person name="Nagahari K."/>
            <person name="Murakami K."/>
            <person name="Yasuda T."/>
            <person name="Iwayanagi T."/>
            <person name="Wagatsuma M."/>
            <person name="Shiratori A."/>
            <person name="Sudo H."/>
            <person name="Hosoiri T."/>
            <person name="Kaku Y."/>
            <person name="Kodaira H."/>
            <person name="Kondo H."/>
            <person name="Sugawara M."/>
            <person name="Takahashi M."/>
            <person name="Kanda K."/>
            <person name="Yokoi T."/>
            <person name="Furuya T."/>
            <person name="Kikkawa E."/>
            <person name="Omura Y."/>
            <person name="Abe K."/>
            <person name="Kamihara K."/>
            <person name="Katsuta N."/>
            <person name="Sato K."/>
            <person name="Tanikawa M."/>
            <person name="Yamazaki M."/>
            <person name="Ninomiya K."/>
            <person name="Ishibashi T."/>
            <person name="Yamashita H."/>
            <person name="Murakawa K."/>
            <person name="Fujimori K."/>
            <person name="Tanai H."/>
            <person name="Kimata M."/>
            <person name="Watanabe M."/>
            <person name="Hiraoka S."/>
            <person name="Chiba Y."/>
            <person name="Ishida S."/>
            <person name="Ono Y."/>
            <person name="Takiguchi S."/>
            <person name="Watanabe S."/>
            <person name="Yosida M."/>
            <person name="Hotuta T."/>
            <person name="Kusano J."/>
            <person name="Kanehori K."/>
            <person name="Takahashi-Fujii A."/>
            <person name="Hara H."/>
            <person name="Tanase T.-O."/>
            <person name="Nomura Y."/>
            <person name="Togiya S."/>
            <person name="Komai F."/>
            <person name="Hara R."/>
            <person name="Takeuchi K."/>
            <person name="Arita M."/>
            <person name="Imose N."/>
            <person name="Musashino K."/>
            <person name="Yuuki H."/>
            <person name="Oshima A."/>
            <person name="Sasaki N."/>
            <person name="Aotsuka S."/>
            <person name="Yoshikawa Y."/>
            <person name="Matsunawa H."/>
            <person name="Ichihara T."/>
            <person name="Shiohata N."/>
            <person name="Sano S."/>
            <person name="Moriya S."/>
            <person name="Momiyama H."/>
            <person name="Satoh N."/>
            <person name="Takami S."/>
            <person name="Terashima Y."/>
            <person name="Suzuki O."/>
            <person name="Nakagawa S."/>
            <person name="Senoh A."/>
            <person name="Mizoguchi H."/>
            <person name="Goto Y."/>
            <person name="Shimizu F."/>
            <person name="Wakebe H."/>
            <person name="Hishigaki H."/>
            <person name="Watanabe T."/>
            <person name="Sugiyama A."/>
            <person name="Takemoto M."/>
            <person name="Kawakami B."/>
            <person name="Yamazaki M."/>
            <person name="Watanabe K."/>
            <person name="Kumagai A."/>
            <person name="Itakura S."/>
            <person name="Fukuzumi Y."/>
            <person name="Fujimori Y."/>
            <person name="Komiyama M."/>
            <person name="Tashiro H."/>
            <person name="Tanigami A."/>
            <person name="Fujiwara T."/>
            <person name="Ono T."/>
            <person name="Yamada K."/>
            <person name="Fujii Y."/>
            <person name="Ozaki K."/>
            <person name="Hirao M."/>
            <person name="Ohmori Y."/>
            <person name="Kawabata A."/>
            <person name="Hikiji T."/>
            <person name="Kobatake N."/>
            <person name="Inagaki H."/>
            <person name="Ikema Y."/>
            <person name="Okamoto S."/>
            <person name="Okitani R."/>
            <person name="Kawakami T."/>
            <person name="Noguchi S."/>
            <person name="Itoh T."/>
            <person name="Shigeta K."/>
            <person name="Senba T."/>
            <person name="Matsumura K."/>
            <person name="Nakajima Y."/>
            <person name="Mizuno T."/>
            <person name="Morinaga M."/>
            <person name="Sasaki M."/>
            <person name="Togashi T."/>
            <person name="Oyama M."/>
            <person name="Hata H."/>
            <person name="Watanabe M."/>
            <person name="Komatsu T."/>
            <person name="Mizushima-Sugano J."/>
            <person name="Satoh T."/>
            <person name="Shirai Y."/>
            <person name="Takahashi Y."/>
            <person name="Nakagawa K."/>
            <person name="Okumura K."/>
            <person name="Nagase T."/>
            <person name="Nomura N."/>
            <person name="Kikuchi H."/>
            <person name="Masuho Y."/>
            <person name="Yamashita R."/>
            <person name="Nakai K."/>
            <person name="Yada T."/>
            <person name="Nakamura Y."/>
            <person name="Ohara O."/>
            <person name="Isogai T."/>
            <person name="Sugano S."/>
        </authorList>
    </citation>
    <scope>NUCLEOTIDE SEQUENCE [LARGE SCALE MRNA] (ISOFORM 1)</scope>
    <source>
        <tissue>Mammary gland</tissue>
    </source>
</reference>
<reference key="3">
    <citation type="journal article" date="2004" name="Nature">
        <title>The DNA sequence and biology of human chromosome 19.</title>
        <authorList>
            <person name="Grimwood J."/>
            <person name="Gordon L.A."/>
            <person name="Olsen A.S."/>
            <person name="Terry A."/>
            <person name="Schmutz J."/>
            <person name="Lamerdin J.E."/>
            <person name="Hellsten U."/>
            <person name="Goodstein D."/>
            <person name="Couronne O."/>
            <person name="Tran-Gyamfi M."/>
            <person name="Aerts A."/>
            <person name="Altherr M."/>
            <person name="Ashworth L."/>
            <person name="Bajorek E."/>
            <person name="Black S."/>
            <person name="Branscomb E."/>
            <person name="Caenepeel S."/>
            <person name="Carrano A.V."/>
            <person name="Caoile C."/>
            <person name="Chan Y.M."/>
            <person name="Christensen M."/>
            <person name="Cleland C.A."/>
            <person name="Copeland A."/>
            <person name="Dalin E."/>
            <person name="Dehal P."/>
            <person name="Denys M."/>
            <person name="Detter J.C."/>
            <person name="Escobar J."/>
            <person name="Flowers D."/>
            <person name="Fotopulos D."/>
            <person name="Garcia C."/>
            <person name="Georgescu A.M."/>
            <person name="Glavina T."/>
            <person name="Gomez M."/>
            <person name="Gonzales E."/>
            <person name="Groza M."/>
            <person name="Hammon N."/>
            <person name="Hawkins T."/>
            <person name="Haydu L."/>
            <person name="Ho I."/>
            <person name="Huang W."/>
            <person name="Israni S."/>
            <person name="Jett J."/>
            <person name="Kadner K."/>
            <person name="Kimball H."/>
            <person name="Kobayashi A."/>
            <person name="Larionov V."/>
            <person name="Leem S.-H."/>
            <person name="Lopez F."/>
            <person name="Lou Y."/>
            <person name="Lowry S."/>
            <person name="Malfatti S."/>
            <person name="Martinez D."/>
            <person name="McCready P.M."/>
            <person name="Medina C."/>
            <person name="Morgan J."/>
            <person name="Nelson K."/>
            <person name="Nolan M."/>
            <person name="Ovcharenko I."/>
            <person name="Pitluck S."/>
            <person name="Pollard M."/>
            <person name="Popkie A.P."/>
            <person name="Predki P."/>
            <person name="Quan G."/>
            <person name="Ramirez L."/>
            <person name="Rash S."/>
            <person name="Retterer J."/>
            <person name="Rodriguez A."/>
            <person name="Rogers S."/>
            <person name="Salamov A."/>
            <person name="Salazar A."/>
            <person name="She X."/>
            <person name="Smith D."/>
            <person name="Slezak T."/>
            <person name="Solovyev V."/>
            <person name="Thayer N."/>
            <person name="Tice H."/>
            <person name="Tsai M."/>
            <person name="Ustaszewska A."/>
            <person name="Vo N."/>
            <person name="Wagner M."/>
            <person name="Wheeler J."/>
            <person name="Wu K."/>
            <person name="Xie G."/>
            <person name="Yang J."/>
            <person name="Dubchak I."/>
            <person name="Furey T.S."/>
            <person name="DeJong P."/>
            <person name="Dickson M."/>
            <person name="Gordon D."/>
            <person name="Eichler E.E."/>
            <person name="Pennacchio L.A."/>
            <person name="Richardson P."/>
            <person name="Stubbs L."/>
            <person name="Rokhsar D.S."/>
            <person name="Myers R.M."/>
            <person name="Rubin E.M."/>
            <person name="Lucas S.M."/>
        </authorList>
    </citation>
    <scope>NUCLEOTIDE SEQUENCE [LARGE SCALE GENOMIC DNA]</scope>
</reference>
<reference key="4">
    <citation type="journal article" date="2004" name="Genome Res.">
        <title>The status, quality, and expansion of the NIH full-length cDNA project: the Mammalian Gene Collection (MGC).</title>
        <authorList>
            <consortium name="The MGC Project Team"/>
        </authorList>
    </citation>
    <scope>NUCLEOTIDE SEQUENCE [LARGE SCALE MRNA] (ISOFORM 3)</scope>
    <source>
        <tissue>Brain</tissue>
    </source>
</reference>
<reference key="5">
    <citation type="journal article" date="2000" name="J. Biol. Chem.">
        <title>Regulation of complex formation of POB1/epsin/adaptor protein complex 2 by mitotic phosphorylation.</title>
        <authorList>
            <person name="Kariya K."/>
            <person name="Koyama S."/>
            <person name="Nakashima S."/>
            <person name="Oshiro T."/>
            <person name="Morinaka K."/>
            <person name="Kikuchi A."/>
        </authorList>
    </citation>
    <scope>PHOSPHORYLATION AT SER-382</scope>
    <scope>MUTAGENESIS OF SER-382</scope>
    <scope>INTERACTION WITH REPS2; EPS15 AND AP-2 ALPHA SUBUNIT</scope>
</reference>
<reference key="6">
    <citation type="journal article" date="1999" name="EMBO J.">
        <title>Small G protein Ral and its downstream molecules regulate endocytosis of EGF and insulin receptors.</title>
        <authorList>
            <person name="Nakashima S."/>
            <person name="Morinaka K."/>
            <person name="Koyama S."/>
            <person name="Ikeda M."/>
            <person name="Kishida M."/>
            <person name="Okawa K."/>
            <person name="Iwamatsu A."/>
            <person name="Kishida S."/>
            <person name="Kikuchi A."/>
        </authorList>
    </citation>
    <scope>FUNCTION</scope>
    <scope>INTERACTION WITH EPS15 AND REPS2</scope>
</reference>
<reference key="7">
    <citation type="journal article" date="2003" name="J. Biol. Chem.">
        <title>RLIP, an effector of the Ral GTPases, is a platform for Cdk1 to phosphorylate epsin during the switch off of endocytosis in mitosis.</title>
        <authorList>
            <person name="Rosse C."/>
            <person name="L'Hoste S."/>
            <person name="Offner N."/>
            <person name="Picard A."/>
            <person name="Camonis J."/>
        </authorList>
    </citation>
    <scope>INTERACTION WITH RALBP1</scope>
</reference>
<reference key="8">
    <citation type="journal article" date="2006" name="Cell">
        <title>Global, in vivo, and site-specific phosphorylation dynamics in signaling networks.</title>
        <authorList>
            <person name="Olsen J.V."/>
            <person name="Blagoev B."/>
            <person name="Gnad F."/>
            <person name="Macek B."/>
            <person name="Kumar C."/>
            <person name="Mortensen P."/>
            <person name="Mann M."/>
        </authorList>
    </citation>
    <scope>PHOSPHORYLATION [LARGE SCALE ANALYSIS] AT THR-494</scope>
    <scope>IDENTIFICATION BY MASS SPECTROMETRY [LARGE SCALE ANALYSIS]</scope>
    <source>
        <tissue>Cervix carcinoma</tissue>
    </source>
</reference>
<reference key="9">
    <citation type="journal article" date="2006" name="Dev. Cell">
        <title>Molecular switches involving the AP-2 beta2 appendage regulate endocytic cargo selection and clathrin coat assembly.</title>
        <authorList>
            <person name="Edeling M.A."/>
            <person name="Mishra S.K."/>
            <person name="Keyel P.A."/>
            <person name="Steinhauser A.L."/>
            <person name="Collins B.M."/>
            <person name="Roth R."/>
            <person name="Heuser J.E."/>
            <person name="Owen D.J."/>
            <person name="Traub L.M."/>
        </authorList>
    </citation>
    <scope>INTERACTION WITH AP2B1</scope>
    <scope>MUTAGENESIS OF PHE-404</scope>
</reference>
<reference key="10">
    <citation type="journal article" date="2006" name="Nat. Biotechnol.">
        <title>A probability-based approach for high-throughput protein phosphorylation analysis and site localization.</title>
        <authorList>
            <person name="Beausoleil S.A."/>
            <person name="Villen J."/>
            <person name="Gerber S.A."/>
            <person name="Rush J."/>
            <person name="Gygi S.P."/>
        </authorList>
    </citation>
    <scope>PHOSPHORYLATION [LARGE SCALE ANALYSIS] AT SER-454 AND THR-460</scope>
    <scope>IDENTIFICATION BY MASS SPECTROMETRY [LARGE SCALE ANALYSIS]</scope>
    <source>
        <tissue>Cervix carcinoma</tissue>
    </source>
</reference>
<reference key="11">
    <citation type="journal article" date="2008" name="J. Proteome Res.">
        <title>Phosphorylation analysis of primary human T lymphocytes using sequential IMAC and titanium oxide enrichment.</title>
        <authorList>
            <person name="Carrascal M."/>
            <person name="Ovelleiro D."/>
            <person name="Casas V."/>
            <person name="Gay M."/>
            <person name="Abian J."/>
        </authorList>
    </citation>
    <scope>IDENTIFICATION BY MASS SPECTROMETRY [LARGE SCALE ANALYSIS]</scope>
    <source>
        <tissue>T-cell</tissue>
    </source>
</reference>
<reference key="12">
    <citation type="journal article" date="2008" name="Mol. Biol. Cell">
        <title>The ubiquitin-like protein PLIC-2 is a negative regulator of G protein-coupled receptor endocytosis.</title>
        <authorList>
            <person name="N'Diaye E.N."/>
            <person name="Hanyaloglu A.C."/>
            <person name="Kajihara K.K."/>
            <person name="Puthenveedu M.A."/>
            <person name="Wu P."/>
            <person name="von Zastrow M."/>
            <person name="Brown E.J."/>
        </authorList>
    </citation>
    <scope>INTERACTION WITH UBQLN2</scope>
</reference>
<reference key="13">
    <citation type="journal article" date="2008" name="Proc. Natl. Acad. Sci. U.S.A.">
        <title>A quantitative atlas of mitotic phosphorylation.</title>
        <authorList>
            <person name="Dephoure N."/>
            <person name="Zhou C."/>
            <person name="Villen J."/>
            <person name="Beausoleil S.A."/>
            <person name="Bakalarski C.E."/>
            <person name="Elledge S.J."/>
            <person name="Gygi S.P."/>
        </authorList>
    </citation>
    <scope>PHOSPHORYLATION [LARGE SCALE ANALYSIS] AT SER-435; SER-454; THR-460 AND THR-494</scope>
    <scope>IDENTIFICATION BY MASS SPECTROMETRY [LARGE SCALE ANALYSIS]</scope>
    <source>
        <tissue>Cervix carcinoma</tissue>
    </source>
</reference>
<reference key="14">
    <citation type="journal article" date="2009" name="Sci. Signal.">
        <title>Quantitative phosphoproteomic analysis of T cell receptor signaling reveals system-wide modulation of protein-protein interactions.</title>
        <authorList>
            <person name="Mayya V."/>
            <person name="Lundgren D.H."/>
            <person name="Hwang S.-I."/>
            <person name="Rezaul K."/>
            <person name="Wu L."/>
            <person name="Eng J.K."/>
            <person name="Rodionov V."/>
            <person name="Han D.K."/>
        </authorList>
    </citation>
    <scope>PHOSPHORYLATION [LARGE SCALE ANALYSIS] AT SER-419; SER-420; SER-435; SER-454; THR-460 AND THR-470</scope>
    <scope>IDENTIFICATION BY MASS SPECTROMETRY [LARGE SCALE ANALYSIS]</scope>
    <source>
        <tissue>Leukemic T-cell</tissue>
    </source>
</reference>
<reference key="15">
    <citation type="journal article" date="2010" name="Sci. Signal.">
        <title>Quantitative phosphoproteomics reveals widespread full phosphorylation site occupancy during mitosis.</title>
        <authorList>
            <person name="Olsen J.V."/>
            <person name="Vermeulen M."/>
            <person name="Santamaria A."/>
            <person name="Kumar C."/>
            <person name="Miller M.L."/>
            <person name="Jensen L.J."/>
            <person name="Gnad F."/>
            <person name="Cox J."/>
            <person name="Jensen T.S."/>
            <person name="Nigg E.A."/>
            <person name="Brunak S."/>
            <person name="Mann M."/>
        </authorList>
    </citation>
    <scope>PHOSPHORYLATION [LARGE SCALE ANALYSIS] AT SER-435; SER-454; THR-460 AND THR-494</scope>
    <scope>IDENTIFICATION BY MASS SPECTROMETRY [LARGE SCALE ANALYSIS]</scope>
    <source>
        <tissue>Cervix carcinoma</tissue>
    </source>
</reference>
<reference key="16">
    <citation type="journal article" date="2011" name="BMC Syst. Biol.">
        <title>Initial characterization of the human central proteome.</title>
        <authorList>
            <person name="Burkard T.R."/>
            <person name="Planyavsky M."/>
            <person name="Kaupe I."/>
            <person name="Breitwieser F.P."/>
            <person name="Buerckstuemmer T."/>
            <person name="Bennett K.L."/>
            <person name="Superti-Furga G."/>
            <person name="Colinge J."/>
        </authorList>
    </citation>
    <scope>IDENTIFICATION BY MASS SPECTROMETRY [LARGE SCALE ANALYSIS]</scope>
</reference>
<reference key="17">
    <citation type="journal article" date="2011" name="Sci. Signal.">
        <title>System-wide temporal characterization of the proteome and phosphoproteome of human embryonic stem cell differentiation.</title>
        <authorList>
            <person name="Rigbolt K.T."/>
            <person name="Prokhorova T.A."/>
            <person name="Akimov V."/>
            <person name="Henningsen J."/>
            <person name="Johansen P.T."/>
            <person name="Kratchmarova I."/>
            <person name="Kassem M."/>
            <person name="Mann M."/>
            <person name="Olsen J.V."/>
            <person name="Blagoev B."/>
        </authorList>
    </citation>
    <scope>IDENTIFICATION BY MASS SPECTROMETRY [LARGE SCALE ANALYSIS]</scope>
</reference>
<reference key="18">
    <citation type="journal article" date="2013" name="J. Proteome Res.">
        <title>Toward a comprehensive characterization of a human cancer cell phosphoproteome.</title>
        <authorList>
            <person name="Zhou H."/>
            <person name="Di Palma S."/>
            <person name="Preisinger C."/>
            <person name="Peng M."/>
            <person name="Polat A.N."/>
            <person name="Heck A.J."/>
            <person name="Mohammed S."/>
        </authorList>
    </citation>
    <scope>PHOSPHORYLATION [LARGE SCALE ANALYSIS] AT SER-435; SER-447 AND SER-454</scope>
    <scope>IDENTIFICATION BY MASS SPECTROMETRY [LARGE SCALE ANALYSIS]</scope>
    <source>
        <tissue>Cervix carcinoma</tissue>
        <tissue>Erythroleukemia</tissue>
    </source>
</reference>
<reference key="19">
    <citation type="journal article" date="2014" name="J. Proteomics">
        <title>An enzyme assisted RP-RPLC approach for in-depth analysis of human liver phosphoproteome.</title>
        <authorList>
            <person name="Bian Y."/>
            <person name="Song C."/>
            <person name="Cheng K."/>
            <person name="Dong M."/>
            <person name="Wang F."/>
            <person name="Huang J."/>
            <person name="Sun D."/>
            <person name="Wang L."/>
            <person name="Ye M."/>
            <person name="Zou H."/>
        </authorList>
    </citation>
    <scope>PHOSPHORYLATION [LARGE SCALE ANALYSIS] AT SER-419; SER-420; SER-435; SER-447; SER-454 AND THR-464</scope>
    <scope>IDENTIFICATION BY MASS SPECTROMETRY [LARGE SCALE ANALYSIS]</scope>
    <source>
        <tissue>Liver</tissue>
    </source>
</reference>
<reference key="20">
    <citation type="journal article" date="2015" name="Proteomics">
        <title>N-terminome analysis of the human mitochondrial proteome.</title>
        <authorList>
            <person name="Vaca Jacome A.S."/>
            <person name="Rabilloud T."/>
            <person name="Schaeffer-Reiss C."/>
            <person name="Rompais M."/>
            <person name="Ayoub D."/>
            <person name="Lane L."/>
            <person name="Bairoch A."/>
            <person name="Van Dorsselaer A."/>
            <person name="Carapito C."/>
        </authorList>
    </citation>
    <scope>IDENTIFICATION BY MASS SPECTROMETRY [LARGE SCALE ANALYSIS]</scope>
</reference>
<reference key="21">
    <citation type="journal article" date="2022" name="EMBO Rep.">
        <title>ENTREP/FAM189A2 encodes a new ITCH ubiquitin ligase activator that is downregulated in breast cancer.</title>
        <authorList>
            <person name="Tsunoda T."/>
            <person name="Riku M."/>
            <person name="Yamada N."/>
            <person name="Tsuchiya H."/>
            <person name="Tomita T."/>
            <person name="Suzuki M."/>
            <person name="Kizuki M."/>
            <person name="Inoko A."/>
            <person name="Ito H."/>
            <person name="Murotani K."/>
            <person name="Murakami H."/>
            <person name="Saeki Y."/>
            <person name="Kasai K."/>
        </authorList>
    </citation>
    <scope>INTERACTION WITH ENTREP1</scope>
</reference>
<reference key="22">
    <citation type="journal article" date="2002" name="J. Struct. Funct. Genomics">
        <title>Solution structure of the epsin N-terminal homology (ENTH) domain of human epsin.</title>
        <authorList>
            <person name="Koshiba S."/>
            <person name="Kigawa T."/>
            <person name="Kikuchi A."/>
            <person name="Yokoyama S."/>
        </authorList>
    </citation>
    <scope>STRUCTURE BY NMR OF 1-144</scope>
</reference>
<protein>
    <recommendedName>
        <fullName>Epsin-1</fullName>
    </recommendedName>
    <alternativeName>
        <fullName>EH domain-binding mitotic phosphoprotein</fullName>
    </alternativeName>
    <alternativeName>
        <fullName>EPS-15-interacting protein 1</fullName>
    </alternativeName>
</protein>
<accession>Q9Y6I3</accession>
<accession>Q86ST3</accession>
<accession>Q9HA18</accession>
<gene>
    <name type="primary">EPN1</name>
</gene>
<dbReference type="EMBL" id="AF073727">
    <property type="protein sequence ID" value="AAD38326.1"/>
    <property type="status" value="ALT_FRAME"/>
    <property type="molecule type" value="mRNA"/>
</dbReference>
<dbReference type="EMBL" id="AK022454">
    <property type="protein sequence ID" value="BAB14041.1"/>
    <property type="molecule type" value="mRNA"/>
</dbReference>
<dbReference type="EMBL" id="AC008735">
    <property type="status" value="NOT_ANNOTATED_CDS"/>
    <property type="molecule type" value="Genomic_DNA"/>
</dbReference>
<dbReference type="EMBL" id="AC010525">
    <property type="status" value="NOT_ANNOTATED_CDS"/>
    <property type="molecule type" value="Genomic_DNA"/>
</dbReference>
<dbReference type="EMBL" id="BC044651">
    <property type="protein sequence ID" value="AAH44651.1"/>
    <property type="molecule type" value="mRNA"/>
</dbReference>
<dbReference type="CCDS" id="CCDS46198.1">
    <molecule id="Q9Y6I3-1"/>
</dbReference>
<dbReference type="CCDS" id="CCDS46199.1">
    <molecule id="Q9Y6I3-2"/>
</dbReference>
<dbReference type="CCDS" id="CCDS46200.1">
    <molecule id="Q9Y6I3-3"/>
</dbReference>
<dbReference type="RefSeq" id="NP_001123543.1">
    <molecule id="Q9Y6I3-1"/>
    <property type="nucleotide sequence ID" value="NM_001130071.2"/>
</dbReference>
<dbReference type="RefSeq" id="NP_001123544.1">
    <molecule id="Q9Y6I3-2"/>
    <property type="nucleotide sequence ID" value="NM_001130072.2"/>
</dbReference>
<dbReference type="RefSeq" id="NP_037465.2">
    <molecule id="Q9Y6I3-3"/>
    <property type="nucleotide sequence ID" value="NM_013333.3"/>
</dbReference>
<dbReference type="RefSeq" id="XP_005258886.1">
    <property type="nucleotide sequence ID" value="XM_005258829.2"/>
</dbReference>
<dbReference type="RefSeq" id="XP_011525183.1">
    <property type="nucleotide sequence ID" value="XM_011526881.1"/>
</dbReference>
<dbReference type="RefSeq" id="XP_016882211.1">
    <property type="nucleotide sequence ID" value="XM_017026722.1"/>
</dbReference>
<dbReference type="PDB" id="1INZ">
    <property type="method" value="NMR"/>
    <property type="chains" value="A=1-144"/>
</dbReference>
<dbReference type="PDB" id="1KYD">
    <property type="method" value="X-ray"/>
    <property type="resolution" value="2.00 A"/>
    <property type="chains" value="P=366-370"/>
</dbReference>
<dbReference type="PDBsum" id="1INZ"/>
<dbReference type="PDBsum" id="1KYD"/>
<dbReference type="BMRB" id="Q9Y6I3"/>
<dbReference type="SMR" id="Q9Y6I3"/>
<dbReference type="BioGRID" id="118965">
    <property type="interactions" value="119"/>
</dbReference>
<dbReference type="CORUM" id="Q9Y6I3"/>
<dbReference type="ELM" id="Q9Y6I3"/>
<dbReference type="FunCoup" id="Q9Y6I3">
    <property type="interactions" value="537"/>
</dbReference>
<dbReference type="IntAct" id="Q9Y6I3">
    <property type="interactions" value="69"/>
</dbReference>
<dbReference type="MINT" id="Q9Y6I3"/>
<dbReference type="STRING" id="9606.ENSP00000406209"/>
<dbReference type="BindingDB" id="Q9Y6I3"/>
<dbReference type="ChEMBL" id="CHEMBL3259465"/>
<dbReference type="DrugBank" id="DB03316">
    <property type="generic name" value="1,4-Dioxane"/>
</dbReference>
<dbReference type="DrugBank" id="DB03401">
    <property type="generic name" value="1D-myo-inositol 1,4,5-trisphosphate"/>
</dbReference>
<dbReference type="MoonDB" id="Q9Y6I3">
    <property type="type" value="Curated"/>
</dbReference>
<dbReference type="GlyCosmos" id="Q9Y6I3">
    <property type="glycosylation" value="1 site, 1 glycan"/>
</dbReference>
<dbReference type="GlyGen" id="Q9Y6I3">
    <property type="glycosylation" value="9 sites, 2 O-linked glycans (3 sites)"/>
</dbReference>
<dbReference type="iPTMnet" id="Q9Y6I3"/>
<dbReference type="MetOSite" id="Q9Y6I3"/>
<dbReference type="PhosphoSitePlus" id="Q9Y6I3"/>
<dbReference type="SwissPalm" id="Q9Y6I3"/>
<dbReference type="BioMuta" id="EPN1"/>
<dbReference type="DMDM" id="332278179"/>
<dbReference type="jPOST" id="Q9Y6I3"/>
<dbReference type="MassIVE" id="Q9Y6I3"/>
<dbReference type="PaxDb" id="9606-ENSP00000406209"/>
<dbReference type="PeptideAtlas" id="Q9Y6I3"/>
<dbReference type="ProteomicsDB" id="86689">
    <molecule id="Q9Y6I3-2"/>
</dbReference>
<dbReference type="ProteomicsDB" id="86690">
    <molecule id="Q9Y6I3-1"/>
</dbReference>
<dbReference type="ProteomicsDB" id="86691">
    <molecule id="Q9Y6I3-3"/>
</dbReference>
<dbReference type="Pumba" id="Q9Y6I3"/>
<dbReference type="Antibodypedia" id="4051">
    <property type="antibodies" value="224 antibodies from 31 providers"/>
</dbReference>
<dbReference type="DNASU" id="29924"/>
<dbReference type="Ensembl" id="ENST00000085079.11">
    <molecule id="Q9Y6I3-3"/>
    <property type="protein sequence ID" value="ENSP00000085079.6"/>
    <property type="gene ID" value="ENSG00000063245.15"/>
</dbReference>
<dbReference type="Ensembl" id="ENST00000270460.11">
    <molecule id="Q9Y6I3-2"/>
    <property type="protein sequence ID" value="ENSP00000270460.6"/>
    <property type="gene ID" value="ENSG00000063245.15"/>
</dbReference>
<dbReference type="Ensembl" id="ENST00000411543.6">
    <molecule id="Q9Y6I3-1"/>
    <property type="protein sequence ID" value="ENSP00000406209.1"/>
    <property type="gene ID" value="ENSG00000063245.15"/>
</dbReference>
<dbReference type="GeneID" id="29924"/>
<dbReference type="KEGG" id="hsa:29924"/>
<dbReference type="MANE-Select" id="ENST00000270460.11">
    <property type="protein sequence ID" value="ENSP00000270460.6"/>
    <property type="RefSeq nucleotide sequence ID" value="NM_001130072.2"/>
    <property type="RefSeq protein sequence ID" value="NP_001123544.1"/>
</dbReference>
<dbReference type="UCSC" id="uc002qlv.4">
    <molecule id="Q9Y6I3-2"/>
    <property type="organism name" value="human"/>
</dbReference>
<dbReference type="AGR" id="HGNC:21604"/>
<dbReference type="CTD" id="29924"/>
<dbReference type="DisGeNET" id="29924"/>
<dbReference type="GeneCards" id="EPN1"/>
<dbReference type="HGNC" id="HGNC:21604">
    <property type="gene designation" value="EPN1"/>
</dbReference>
<dbReference type="HPA" id="ENSG00000063245">
    <property type="expression patterns" value="Low tissue specificity"/>
</dbReference>
<dbReference type="MIM" id="607262">
    <property type="type" value="gene"/>
</dbReference>
<dbReference type="neXtProt" id="NX_Q9Y6I3"/>
<dbReference type="OpenTargets" id="ENSG00000063245"/>
<dbReference type="PharmGKB" id="PA134860916"/>
<dbReference type="VEuPathDB" id="HostDB:ENSG00000063245"/>
<dbReference type="eggNOG" id="KOG2056">
    <property type="taxonomic scope" value="Eukaryota"/>
</dbReference>
<dbReference type="GeneTree" id="ENSGT00940000160411"/>
<dbReference type="HOGENOM" id="CLU_012678_4_2_1"/>
<dbReference type="InParanoid" id="Q9Y6I3"/>
<dbReference type="OMA" id="IARCSFN"/>
<dbReference type="OrthoDB" id="4033880at2759"/>
<dbReference type="PAN-GO" id="Q9Y6I3">
    <property type="GO annotations" value="6 GO annotations based on evolutionary models"/>
</dbReference>
<dbReference type="TreeFam" id="TF313361"/>
<dbReference type="PathwayCommons" id="Q9Y6I3"/>
<dbReference type="Reactome" id="R-HSA-182971">
    <property type="pathway name" value="EGFR downregulation"/>
</dbReference>
<dbReference type="Reactome" id="R-HSA-8856825">
    <property type="pathway name" value="Cargo recognition for clathrin-mediated endocytosis"/>
</dbReference>
<dbReference type="Reactome" id="R-HSA-8856828">
    <property type="pathway name" value="Clathrin-mediated endocytosis"/>
</dbReference>
<dbReference type="SignaLink" id="Q9Y6I3"/>
<dbReference type="SIGNOR" id="Q9Y6I3"/>
<dbReference type="BioGRID-ORCS" id="29924">
    <property type="hits" value="33 hits in 1173 CRISPR screens"/>
</dbReference>
<dbReference type="ChiTaRS" id="EPN1">
    <property type="organism name" value="human"/>
</dbReference>
<dbReference type="EvolutionaryTrace" id="Q9Y6I3"/>
<dbReference type="GeneWiki" id="EPN1"/>
<dbReference type="GenomeRNAi" id="29924"/>
<dbReference type="Pharos" id="Q9Y6I3">
    <property type="development level" value="Tbio"/>
</dbReference>
<dbReference type="PRO" id="PR:Q9Y6I3"/>
<dbReference type="Proteomes" id="UP000005640">
    <property type="component" value="Chromosome 19"/>
</dbReference>
<dbReference type="RNAct" id="Q9Y6I3">
    <property type="molecule type" value="protein"/>
</dbReference>
<dbReference type="Bgee" id="ENSG00000063245">
    <property type="expression patterns" value="Expressed in apex of heart and 184 other cell types or tissues"/>
</dbReference>
<dbReference type="ExpressionAtlas" id="Q9Y6I3">
    <property type="expression patterns" value="baseline and differential"/>
</dbReference>
<dbReference type="GO" id="GO:0030125">
    <property type="term" value="C:clathrin vesicle coat"/>
    <property type="evidence" value="ECO:0000318"/>
    <property type="project" value="GO_Central"/>
</dbReference>
<dbReference type="GO" id="GO:0005905">
    <property type="term" value="C:clathrin-coated pit"/>
    <property type="evidence" value="ECO:0007669"/>
    <property type="project" value="UniProtKB-SubCell"/>
</dbReference>
<dbReference type="GO" id="GO:0005829">
    <property type="term" value="C:cytosol"/>
    <property type="evidence" value="ECO:0000304"/>
    <property type="project" value="Reactome"/>
</dbReference>
<dbReference type="GO" id="GO:0005768">
    <property type="term" value="C:endosome"/>
    <property type="evidence" value="ECO:0000318"/>
    <property type="project" value="GO_Central"/>
</dbReference>
<dbReference type="GO" id="GO:0005634">
    <property type="term" value="C:nucleus"/>
    <property type="evidence" value="ECO:0007669"/>
    <property type="project" value="UniProtKB-SubCell"/>
</dbReference>
<dbReference type="GO" id="GO:0005886">
    <property type="term" value="C:plasma membrane"/>
    <property type="evidence" value="ECO:0000318"/>
    <property type="project" value="GO_Central"/>
</dbReference>
<dbReference type="GO" id="GO:0030276">
    <property type="term" value="F:clathrin binding"/>
    <property type="evidence" value="ECO:0000318"/>
    <property type="project" value="GO_Central"/>
</dbReference>
<dbReference type="GO" id="GO:0140313">
    <property type="term" value="F:molecular sequestering activity"/>
    <property type="evidence" value="ECO:0000353"/>
    <property type="project" value="DisProt"/>
</dbReference>
<dbReference type="GO" id="GO:0005543">
    <property type="term" value="F:phospholipid binding"/>
    <property type="evidence" value="ECO:0000318"/>
    <property type="project" value="GO_Central"/>
</dbReference>
<dbReference type="GO" id="GO:0048568">
    <property type="term" value="P:embryonic organ development"/>
    <property type="evidence" value="ECO:0007669"/>
    <property type="project" value="Ensembl"/>
</dbReference>
<dbReference type="GO" id="GO:0006897">
    <property type="term" value="P:endocytosis"/>
    <property type="evidence" value="ECO:0000318"/>
    <property type="project" value="GO_Central"/>
</dbReference>
<dbReference type="GO" id="GO:0007565">
    <property type="term" value="P:female pregnancy"/>
    <property type="evidence" value="ECO:0007669"/>
    <property type="project" value="Ensembl"/>
</dbReference>
<dbReference type="GO" id="GO:0001701">
    <property type="term" value="P:in utero embryonic development"/>
    <property type="evidence" value="ECO:0007669"/>
    <property type="project" value="Ensembl"/>
</dbReference>
<dbReference type="GO" id="GO:1903671">
    <property type="term" value="P:negative regulation of sprouting angiogenesis"/>
    <property type="evidence" value="ECO:0000316"/>
    <property type="project" value="BHF-UCL"/>
</dbReference>
<dbReference type="GO" id="GO:0007219">
    <property type="term" value="P:Notch signaling pathway"/>
    <property type="evidence" value="ECO:0007669"/>
    <property type="project" value="Ensembl"/>
</dbReference>
<dbReference type="CDD" id="cd16990">
    <property type="entry name" value="ENTH_Epsin"/>
    <property type="match status" value="1"/>
</dbReference>
<dbReference type="DisProt" id="DP02930"/>
<dbReference type="FunFam" id="1.25.40.90:FF:000002">
    <property type="entry name" value="epsin-2 isoform X1"/>
    <property type="match status" value="1"/>
</dbReference>
<dbReference type="Gene3D" id="1.25.40.90">
    <property type="match status" value="1"/>
</dbReference>
<dbReference type="InterPro" id="IPR013809">
    <property type="entry name" value="ENTH"/>
</dbReference>
<dbReference type="InterPro" id="IPR008942">
    <property type="entry name" value="ENTH_VHS"/>
</dbReference>
<dbReference type="InterPro" id="IPR003903">
    <property type="entry name" value="UIM_dom"/>
</dbReference>
<dbReference type="PANTHER" id="PTHR12276:SF48">
    <property type="entry name" value="EPSIN-1"/>
    <property type="match status" value="1"/>
</dbReference>
<dbReference type="PANTHER" id="PTHR12276">
    <property type="entry name" value="EPSIN/ENT-RELATED"/>
    <property type="match status" value="1"/>
</dbReference>
<dbReference type="Pfam" id="PF01417">
    <property type="entry name" value="ENTH"/>
    <property type="match status" value="1"/>
</dbReference>
<dbReference type="SMART" id="SM00273">
    <property type="entry name" value="ENTH"/>
    <property type="match status" value="1"/>
</dbReference>
<dbReference type="SMART" id="SM00726">
    <property type="entry name" value="UIM"/>
    <property type="match status" value="3"/>
</dbReference>
<dbReference type="SUPFAM" id="SSF48464">
    <property type="entry name" value="ENTH/VHS domain"/>
    <property type="match status" value="1"/>
</dbReference>
<dbReference type="PROSITE" id="PS50942">
    <property type="entry name" value="ENTH"/>
    <property type="match status" value="1"/>
</dbReference>
<dbReference type="PROSITE" id="PS50330">
    <property type="entry name" value="UIM"/>
    <property type="match status" value="3"/>
</dbReference>
<name>EPN1_HUMAN</name>
<sequence length="576" mass="60293">MSTSSLRRQMKNIVHNYSEAEIKVREATSNDPWGPSSSLMSEIADLTYNVVAFSEIMSMIWKRLNDHGKNWRHVYKAMTLMEYLIKTGSERVSQQCKENMYAVQTLKDFQYVDRDGKDQGVNVREKAKQLVALLRDEDRLREERAHALKTKEKLAQTATASSAAVGSGPPPEAEQAWPQSSGEEELQLQLALAMSKEEADQPPSCGPEDDAQLQLALSLSREEHDKEERIRRGDDLRLQMAIEESKRETGGKEESSLMDLADVFTAPAPAPTTDPWGGPAPMAAAVPTAAPTSDPWGGPPVPPAADPWGGPAPTPASGDPWRPAAPAGPSVDPWGGTPAPAAGEGPTPDPWGSSDGGVPVSGPSASDPWTPAPAFSDPWGGSPAKPSTNGTTAAGGFDTEPDEFSDFDRLRTALPTSGSSAGELELLAGEVPARSPGAFDMSGVRGSLAEAVGSPPPAATPTPTPPTRKTPESFLGPNAALVDLDSLVSRPGPTPPGAKASNPFLPGGGPATGPSVTNPFQPAPPATLTLNQLRLSPVPPVPGAPPTYISPLGGGPGLPPMMPPGPPAPNTNPFLL</sequence>
<proteinExistence type="evidence at protein level"/>
<organism>
    <name type="scientific">Homo sapiens</name>
    <name type="common">Human</name>
    <dbReference type="NCBI Taxonomy" id="9606"/>
    <lineage>
        <taxon>Eukaryota</taxon>
        <taxon>Metazoa</taxon>
        <taxon>Chordata</taxon>
        <taxon>Craniata</taxon>
        <taxon>Vertebrata</taxon>
        <taxon>Euteleostomi</taxon>
        <taxon>Mammalia</taxon>
        <taxon>Eutheria</taxon>
        <taxon>Euarchontoglires</taxon>
        <taxon>Primates</taxon>
        <taxon>Haplorrhini</taxon>
        <taxon>Catarrhini</taxon>
        <taxon>Hominidae</taxon>
        <taxon>Homo</taxon>
    </lineage>
</organism>
<comment type="function">
    <text evidence="2 7 8">Binds to membranes enriched in phosphatidylinositol 4,5-bisphosphate (PtdIns(4,5)P2). Modifies membrane curvature and facilitates the formation of clathrin-coated invaginations (By similarity). Regulates receptor-mediated endocytosis (PubMed:10393179, PubMed:10557078).</text>
</comment>
<comment type="subunit">
    <text evidence="2 3 7 8 9 10 11 12 13">Monomer. Binds clathrin, ZBTB16/ZNF145 and ITSN1 (By similarity). Binds ubiquitinated proteins (By similarity). Binds AP2A1 and AP2A2. Interacts with RALBP1 in a complex also containing NUMB and TFAP2A during interphase and mitosis. Interacts with AP2B1. Interacts with UBQLN2. Interacts with REPS2; the interaction is direct (PubMed:10393179, PubMed:10557078, PubMed:10764745). Interacts with EPS15; the interaction is direct (PubMed:10393179, PubMed:10764745). Interacts with ENTREP1 (PubMed:34927784).</text>
</comment>
<comment type="interaction">
    <interactant intactId="EBI-713198">
        <id>Q9Y6I3</id>
    </interactant>
    <interactant intactId="EBI-724310">
        <id>Q15038</id>
        <label>DAZAP2</label>
    </interactant>
    <organismsDiffer>false</organismsDiffer>
    <experiments>3</experiments>
</comment>
<comment type="interaction">
    <interactant intactId="EBI-713198">
        <id>Q9Y6I3</id>
    </interactant>
    <interactant intactId="EBI-8636612">
        <id>Q15884</id>
        <label>ENTREP1</label>
    </interactant>
    <organismsDiffer>false</organismsDiffer>
    <experiments>5</experiments>
</comment>
<comment type="interaction">
    <interactant intactId="EBI-713198">
        <id>Q9Y6I3</id>
    </interactant>
    <interactant intactId="EBI-396684">
        <id>P42566</id>
        <label>EPS15</label>
    </interactant>
    <organismsDiffer>false</organismsDiffer>
    <experiments>2</experiments>
</comment>
<comment type="interaction">
    <interactant intactId="EBI-713198">
        <id>Q9Y6I3</id>
    </interactant>
    <interactant intactId="EBI-350495">
        <id>O43175</id>
        <label>PHGDH</label>
    </interactant>
    <organismsDiffer>false</organismsDiffer>
    <experiments>5</experiments>
</comment>
<comment type="interaction">
    <interactant intactId="EBI-713198">
        <id>Q9Y6I3</id>
    </interactant>
    <interactant intactId="EBI-373552">
        <id>Q96CS7</id>
        <label>PLEKHB2</label>
    </interactant>
    <organismsDiffer>false</organismsDiffer>
    <experiments>3</experiments>
</comment>
<comment type="interaction">
    <interactant intactId="EBI-12026538">
        <id>Q9Y6I3-3</id>
    </interactant>
    <interactant intactId="EBI-724310">
        <id>Q15038</id>
        <label>DAZAP2</label>
    </interactant>
    <organismsDiffer>false</organismsDiffer>
    <experiments>3</experiments>
</comment>
<comment type="interaction">
    <interactant intactId="EBI-12026538">
        <id>Q9Y6I3-3</id>
    </interactant>
    <interactant intactId="EBI-725647">
        <id>Q99732</id>
        <label>LITAF</label>
    </interactant>
    <organismsDiffer>false</organismsDiffer>
    <experiments>3</experiments>
</comment>
<comment type="subcellular location">
    <subcellularLocation>
        <location evidence="1">Cytoplasm</location>
    </subcellularLocation>
    <subcellularLocation>
        <location evidence="1">Cell membrane</location>
        <topology evidence="1">Peripheral membrane protein</topology>
    </subcellularLocation>
    <subcellularLocation>
        <location evidence="1">Nucleus</location>
    </subcellularLocation>
    <subcellularLocation>
        <location evidence="1">Membrane</location>
        <location evidence="1">Clathrin-coated pit</location>
    </subcellularLocation>
    <text evidence="1">Associated with the cytoplasmic membrane at sites where clathrin-coated pits are forming. Colocalizes with clathrin and AP-2 in a punctate pattern on the plasma membrane. Detected in presynaptic nerve terminals and in Golgi stacks. May shuttle to the nucleus when associated with ZBTB16/ZNF145 (By similarity).</text>
</comment>
<comment type="alternative products">
    <event type="alternative splicing"/>
    <isoform>
        <id>Q9Y6I3-2</id>
        <name>1</name>
        <sequence type="displayed"/>
    </isoform>
    <isoform>
        <id>Q9Y6I3-1</id>
        <name>2</name>
        <sequence type="described" ref="VSP_041010 VSP_041011"/>
    </isoform>
    <isoform>
        <id>Q9Y6I3-3</id>
        <name>3</name>
        <sequence type="described" ref="VSP_041011 VSP_041012"/>
    </isoform>
</comment>
<comment type="domain">
    <text>The NPF repeat domain is involved in EPS15 binding.</text>
</comment>
<comment type="domain">
    <text>The DPW repeat domain is involved in AP2A2 and clathrin binding.</text>
</comment>
<comment type="domain">
    <text evidence="1">The [DE]-X(1,2)-F-X-X-[FL]-X-X-X-R motif mediates interaction with the AP-2 complex subunit AP2B1.</text>
</comment>
<comment type="PTM">
    <text evidence="9">Phosphorylated on serine and/or threonine residues in mitotic cells. Phosphorylation reduces interaction with REPS2, AP-2 and the membrane fraction. Depolarization of synaptosomes results in dephosphorylation.</text>
</comment>
<comment type="PTM">
    <text evidence="1">Ubiquitinated.</text>
</comment>
<comment type="miscellaneous">
    <molecule>Isoform 3</molecule>
    <text evidence="16">May be due to a competing donor splice site.</text>
</comment>
<comment type="similarity">
    <text evidence="16">Belongs to the epsin family.</text>
</comment>
<comment type="sequence caution" evidence="16">
    <molecule>Isoform 2</molecule>
    <conflict type="frameshift">
        <sequence resource="EMBL-CDS" id="AAD38326"/>
    </conflict>
</comment>
<comment type="online information" name="Protein Spotlight">
    <link uri="https://www.proteinspotlight.org/back_issues/042"/>
    <text>The bubble's bend - Issue 42 of January 2004</text>
</comment>
<evidence type="ECO:0000250" key="1"/>
<evidence type="ECO:0000250" key="2">
    <source>
        <dbReference type="UniProtKB" id="O88339"/>
    </source>
</evidence>
<evidence type="ECO:0000250" key="3">
    <source>
        <dbReference type="UniProtKB" id="Q80VP1"/>
    </source>
</evidence>
<evidence type="ECO:0000255" key="4">
    <source>
        <dbReference type="PROSITE-ProRule" id="PRU00213"/>
    </source>
</evidence>
<evidence type="ECO:0000255" key="5">
    <source>
        <dbReference type="PROSITE-ProRule" id="PRU00243"/>
    </source>
</evidence>
<evidence type="ECO:0000256" key="6">
    <source>
        <dbReference type="SAM" id="MobiDB-lite"/>
    </source>
</evidence>
<evidence type="ECO:0000269" key="7">
    <source>
    </source>
</evidence>
<evidence type="ECO:0000269" key="8">
    <source>
    </source>
</evidence>
<evidence type="ECO:0000269" key="9">
    <source>
    </source>
</evidence>
<evidence type="ECO:0000269" key="10">
    <source>
    </source>
</evidence>
<evidence type="ECO:0000269" key="11">
    <source>
    </source>
</evidence>
<evidence type="ECO:0000269" key="12">
    <source>
    </source>
</evidence>
<evidence type="ECO:0000269" key="13">
    <source>
    </source>
</evidence>
<evidence type="ECO:0000303" key="14">
    <source>
    </source>
</evidence>
<evidence type="ECO:0000303" key="15">
    <source>
    </source>
</evidence>
<evidence type="ECO:0000305" key="16"/>
<evidence type="ECO:0007744" key="17">
    <source>
    </source>
</evidence>
<evidence type="ECO:0007744" key="18">
    <source>
    </source>
</evidence>
<evidence type="ECO:0007744" key="19">
    <source>
    </source>
</evidence>
<evidence type="ECO:0007744" key="20">
    <source>
    </source>
</evidence>
<evidence type="ECO:0007744" key="21">
    <source>
    </source>
</evidence>
<evidence type="ECO:0007744" key="22">
    <source>
    </source>
</evidence>
<evidence type="ECO:0007744" key="23">
    <source>
    </source>
</evidence>
<evidence type="ECO:0007829" key="24">
    <source>
        <dbReference type="PDB" id="1INZ"/>
    </source>
</evidence>